<comment type="function">
    <text evidence="1 3">The NADP dependent reduction of PAPS into sulfite involves thioredoxin which probably plays the role of a thiol carrier (By similarity). Required for methionine synthesis.</text>
</comment>
<comment type="catalytic activity">
    <reaction>
        <text>[thioredoxin]-disulfide + sulfite + adenosine 3',5'-bisphosphate + 2 H(+) = [thioredoxin]-dithiol + 3'-phosphoadenylyl sulfate</text>
        <dbReference type="Rhea" id="RHEA:11724"/>
        <dbReference type="Rhea" id="RHEA-COMP:10698"/>
        <dbReference type="Rhea" id="RHEA-COMP:10700"/>
        <dbReference type="ChEBI" id="CHEBI:15378"/>
        <dbReference type="ChEBI" id="CHEBI:17359"/>
        <dbReference type="ChEBI" id="CHEBI:29950"/>
        <dbReference type="ChEBI" id="CHEBI:50058"/>
        <dbReference type="ChEBI" id="CHEBI:58339"/>
        <dbReference type="ChEBI" id="CHEBI:58343"/>
        <dbReference type="EC" id="1.8.4.8"/>
    </reaction>
</comment>
<comment type="pathway">
    <text>Sulfur metabolism; hydrogen sulfide biosynthesis; sulfite from sulfate: step 3/3.</text>
</comment>
<comment type="subcellular location">
    <subcellularLocation>
        <location evidence="4">Cytoplasm</location>
    </subcellularLocation>
    <subcellularLocation>
        <location evidence="4">Nucleus</location>
    </subcellularLocation>
</comment>
<comment type="disruption phenotype">
    <text evidence="3">Leads to methionine auxotrophy.</text>
</comment>
<comment type="similarity">
    <text evidence="5">Belongs to the PAPS reductase family. CysH subfamily.</text>
</comment>
<feature type="chain" id="PRO_0000100661" description="Probable phosphoadenosine phosphosulfate reductase">
    <location>
        <begin position="1"/>
        <end position="266"/>
    </location>
</feature>
<feature type="region of interest" description="Disordered" evidence="2">
    <location>
        <begin position="219"/>
        <end position="246"/>
    </location>
</feature>
<feature type="compositionally biased region" description="Basic and acidic residues" evidence="2">
    <location>
        <begin position="223"/>
        <end position="243"/>
    </location>
</feature>
<organism>
    <name type="scientific">Schizosaccharomyces pombe (strain 972 / ATCC 24843)</name>
    <name type="common">Fission yeast</name>
    <dbReference type="NCBI Taxonomy" id="284812"/>
    <lineage>
        <taxon>Eukaryota</taxon>
        <taxon>Fungi</taxon>
        <taxon>Dikarya</taxon>
        <taxon>Ascomycota</taxon>
        <taxon>Taphrinomycotina</taxon>
        <taxon>Schizosaccharomycetes</taxon>
        <taxon>Schizosaccharomycetales</taxon>
        <taxon>Schizosaccharomycetaceae</taxon>
        <taxon>Schizosaccharomyces</taxon>
    </lineage>
</organism>
<dbReference type="EC" id="1.8.4.8"/>
<dbReference type="EMBL" id="CU329670">
    <property type="protein sequence ID" value="CAA93594.1"/>
    <property type="molecule type" value="Genomic_DNA"/>
</dbReference>
<dbReference type="PIR" id="S67435">
    <property type="entry name" value="S67435"/>
</dbReference>
<dbReference type="RefSeq" id="NP_593708.1">
    <property type="nucleotide sequence ID" value="NM_001019139.2"/>
</dbReference>
<dbReference type="SMR" id="Q10270"/>
<dbReference type="BioGRID" id="279282">
    <property type="interactions" value="18"/>
</dbReference>
<dbReference type="FunCoup" id="Q10270">
    <property type="interactions" value="152"/>
</dbReference>
<dbReference type="MINT" id="Q10270"/>
<dbReference type="STRING" id="284812.Q10270"/>
<dbReference type="iPTMnet" id="Q10270"/>
<dbReference type="PaxDb" id="4896-SPAC13G7.06.1"/>
<dbReference type="EnsemblFungi" id="SPAC13G7.06.1">
    <property type="protein sequence ID" value="SPAC13G7.06.1:pep"/>
    <property type="gene ID" value="SPAC13G7.06"/>
</dbReference>
<dbReference type="GeneID" id="2542836"/>
<dbReference type="KEGG" id="spo:2542836"/>
<dbReference type="PomBase" id="SPAC13G7.06">
    <property type="gene designation" value="met16"/>
</dbReference>
<dbReference type="VEuPathDB" id="FungiDB:SPAC13G7.06"/>
<dbReference type="eggNOG" id="KOG0189">
    <property type="taxonomic scope" value="Eukaryota"/>
</dbReference>
<dbReference type="HOGENOM" id="CLU_044089_0_1_1"/>
<dbReference type="InParanoid" id="Q10270"/>
<dbReference type="OMA" id="PIARWTQ"/>
<dbReference type="PhylomeDB" id="Q10270"/>
<dbReference type="UniPathway" id="UPA00140">
    <property type="reaction ID" value="UER00206"/>
</dbReference>
<dbReference type="PRO" id="PR:Q10270"/>
<dbReference type="Proteomes" id="UP000002485">
    <property type="component" value="Chromosome I"/>
</dbReference>
<dbReference type="GO" id="GO:0005829">
    <property type="term" value="C:cytosol"/>
    <property type="evidence" value="ECO:0007005"/>
    <property type="project" value="PomBase"/>
</dbReference>
<dbReference type="GO" id="GO:0005634">
    <property type="term" value="C:nucleus"/>
    <property type="evidence" value="ECO:0007005"/>
    <property type="project" value="PomBase"/>
</dbReference>
<dbReference type="GO" id="GO:0004604">
    <property type="term" value="F:phosphoadenylyl-sulfate reductase (thioredoxin) activity"/>
    <property type="evidence" value="ECO:0000318"/>
    <property type="project" value="GO_Central"/>
</dbReference>
<dbReference type="GO" id="GO:0019344">
    <property type="term" value="P:cysteine biosynthetic process"/>
    <property type="evidence" value="ECO:0007669"/>
    <property type="project" value="UniProtKB-KW"/>
</dbReference>
<dbReference type="GO" id="GO:0070814">
    <property type="term" value="P:hydrogen sulfide biosynthetic process"/>
    <property type="evidence" value="ECO:0007669"/>
    <property type="project" value="UniProtKB-UniPathway"/>
</dbReference>
<dbReference type="GO" id="GO:0009086">
    <property type="term" value="P:methionine biosynthetic process"/>
    <property type="evidence" value="ECO:0007669"/>
    <property type="project" value="UniProtKB-KW"/>
</dbReference>
<dbReference type="GO" id="GO:0019379">
    <property type="term" value="P:sulfate assimilation, phosphoadenylyl sulfate reduction by phosphoadenylyl-sulfate reductase (thioredoxin)"/>
    <property type="evidence" value="ECO:0000318"/>
    <property type="project" value="GO_Central"/>
</dbReference>
<dbReference type="CDD" id="cd23945">
    <property type="entry name" value="PAPS_reductase"/>
    <property type="match status" value="1"/>
</dbReference>
<dbReference type="FunFam" id="3.40.50.620:FF:000151">
    <property type="entry name" value="Phosphoadenosine phosphosulfate reductase"/>
    <property type="match status" value="1"/>
</dbReference>
<dbReference type="Gene3D" id="3.40.50.620">
    <property type="entry name" value="HUPs"/>
    <property type="match status" value="1"/>
</dbReference>
<dbReference type="HAMAP" id="MF_00063">
    <property type="entry name" value="CysH"/>
    <property type="match status" value="1"/>
</dbReference>
<dbReference type="InterPro" id="IPR004511">
    <property type="entry name" value="PAPS/APS_Rdtase"/>
</dbReference>
<dbReference type="InterPro" id="IPR002500">
    <property type="entry name" value="PAPS_reduct_dom"/>
</dbReference>
<dbReference type="InterPro" id="IPR011800">
    <property type="entry name" value="PAPS_reductase_CysH"/>
</dbReference>
<dbReference type="InterPro" id="IPR014729">
    <property type="entry name" value="Rossmann-like_a/b/a_fold"/>
</dbReference>
<dbReference type="NCBIfam" id="TIGR00434">
    <property type="entry name" value="cysH"/>
    <property type="match status" value="1"/>
</dbReference>
<dbReference type="NCBIfam" id="TIGR02057">
    <property type="entry name" value="PAPS_reductase"/>
    <property type="match status" value="1"/>
</dbReference>
<dbReference type="NCBIfam" id="NF002537">
    <property type="entry name" value="PRK02090.1"/>
    <property type="match status" value="1"/>
</dbReference>
<dbReference type="PANTHER" id="PTHR46509">
    <property type="entry name" value="PHOSPHOADENOSINE PHOSPHOSULFATE REDUCTASE"/>
    <property type="match status" value="1"/>
</dbReference>
<dbReference type="PANTHER" id="PTHR46509:SF1">
    <property type="entry name" value="PHOSPHOADENOSINE PHOSPHOSULFATE REDUCTASE"/>
    <property type="match status" value="1"/>
</dbReference>
<dbReference type="Pfam" id="PF01507">
    <property type="entry name" value="PAPS_reduct"/>
    <property type="match status" value="1"/>
</dbReference>
<dbReference type="PIRSF" id="PIRSF000857">
    <property type="entry name" value="PAPS_reductase"/>
    <property type="match status" value="1"/>
</dbReference>
<dbReference type="SUPFAM" id="SSF52402">
    <property type="entry name" value="Adenine nucleotide alpha hydrolases-like"/>
    <property type="match status" value="1"/>
</dbReference>
<sequence>MSSIDTPANKLQAKTLFHPEHLEYINKQLSELSPQDILKWCRWTLPSLFQTSALGLSGLVIMDMLSKMDMNVPLIFINTLHHFPETLDLLEKVKTKYPNVPVHVYRCAEAANEKEFAQKFGEKLWETDESRYDFLVKVEPASRAYSDLNVLAVFTGRRRSQGGERGSLPIVQLDGPVLKINPLANWSFTEVHNYIITNNVPYNELLNKGYRSVGDWHSTQPVREGEDERAGRWRGREKTECGLHSHPQSKFAQYMAELKKKETADQ</sequence>
<evidence type="ECO:0000250" key="1"/>
<evidence type="ECO:0000256" key="2">
    <source>
        <dbReference type="SAM" id="MobiDB-lite"/>
    </source>
</evidence>
<evidence type="ECO:0000269" key="3">
    <source>
    </source>
</evidence>
<evidence type="ECO:0000269" key="4">
    <source>
    </source>
</evidence>
<evidence type="ECO:0000305" key="5"/>
<reference key="1">
    <citation type="journal article" date="2002" name="Nature">
        <title>The genome sequence of Schizosaccharomyces pombe.</title>
        <authorList>
            <person name="Wood V."/>
            <person name="Gwilliam R."/>
            <person name="Rajandream M.A."/>
            <person name="Lyne M.H."/>
            <person name="Lyne R."/>
            <person name="Stewart A."/>
            <person name="Sgouros J.G."/>
            <person name="Peat N."/>
            <person name="Hayles J."/>
            <person name="Baker S.G."/>
            <person name="Basham D."/>
            <person name="Bowman S."/>
            <person name="Brooks K."/>
            <person name="Brown D."/>
            <person name="Brown S."/>
            <person name="Chillingworth T."/>
            <person name="Churcher C.M."/>
            <person name="Collins M."/>
            <person name="Connor R."/>
            <person name="Cronin A."/>
            <person name="Davis P."/>
            <person name="Feltwell T."/>
            <person name="Fraser A."/>
            <person name="Gentles S."/>
            <person name="Goble A."/>
            <person name="Hamlin N."/>
            <person name="Harris D.E."/>
            <person name="Hidalgo J."/>
            <person name="Hodgson G."/>
            <person name="Holroyd S."/>
            <person name="Hornsby T."/>
            <person name="Howarth S."/>
            <person name="Huckle E.J."/>
            <person name="Hunt S."/>
            <person name="Jagels K."/>
            <person name="James K.D."/>
            <person name="Jones L."/>
            <person name="Jones M."/>
            <person name="Leather S."/>
            <person name="McDonald S."/>
            <person name="McLean J."/>
            <person name="Mooney P."/>
            <person name="Moule S."/>
            <person name="Mungall K.L."/>
            <person name="Murphy L.D."/>
            <person name="Niblett D."/>
            <person name="Odell C."/>
            <person name="Oliver K."/>
            <person name="O'Neil S."/>
            <person name="Pearson D."/>
            <person name="Quail M.A."/>
            <person name="Rabbinowitsch E."/>
            <person name="Rutherford K.M."/>
            <person name="Rutter S."/>
            <person name="Saunders D."/>
            <person name="Seeger K."/>
            <person name="Sharp S."/>
            <person name="Skelton J."/>
            <person name="Simmonds M.N."/>
            <person name="Squares R."/>
            <person name="Squares S."/>
            <person name="Stevens K."/>
            <person name="Taylor K."/>
            <person name="Taylor R.G."/>
            <person name="Tivey A."/>
            <person name="Walsh S.V."/>
            <person name="Warren T."/>
            <person name="Whitehead S."/>
            <person name="Woodward J.R."/>
            <person name="Volckaert G."/>
            <person name="Aert R."/>
            <person name="Robben J."/>
            <person name="Grymonprez B."/>
            <person name="Weltjens I."/>
            <person name="Vanstreels E."/>
            <person name="Rieger M."/>
            <person name="Schaefer M."/>
            <person name="Mueller-Auer S."/>
            <person name="Gabel C."/>
            <person name="Fuchs M."/>
            <person name="Duesterhoeft A."/>
            <person name="Fritzc C."/>
            <person name="Holzer E."/>
            <person name="Moestl D."/>
            <person name="Hilbert H."/>
            <person name="Borzym K."/>
            <person name="Langer I."/>
            <person name="Beck A."/>
            <person name="Lehrach H."/>
            <person name="Reinhardt R."/>
            <person name="Pohl T.M."/>
            <person name="Eger P."/>
            <person name="Zimmermann W."/>
            <person name="Wedler H."/>
            <person name="Wambutt R."/>
            <person name="Purnelle B."/>
            <person name="Goffeau A."/>
            <person name="Cadieu E."/>
            <person name="Dreano S."/>
            <person name="Gloux S."/>
            <person name="Lelaure V."/>
            <person name="Mottier S."/>
            <person name="Galibert F."/>
            <person name="Aves S.J."/>
            <person name="Xiang Z."/>
            <person name="Hunt C."/>
            <person name="Moore K."/>
            <person name="Hurst S.M."/>
            <person name="Lucas M."/>
            <person name="Rochet M."/>
            <person name="Gaillardin C."/>
            <person name="Tallada V.A."/>
            <person name="Garzon A."/>
            <person name="Thode G."/>
            <person name="Daga R.R."/>
            <person name="Cruzado L."/>
            <person name="Jimenez J."/>
            <person name="Sanchez M."/>
            <person name="del Rey F."/>
            <person name="Benito J."/>
            <person name="Dominguez A."/>
            <person name="Revuelta J.L."/>
            <person name="Moreno S."/>
            <person name="Armstrong J."/>
            <person name="Forsburg S.L."/>
            <person name="Cerutti L."/>
            <person name="Lowe T."/>
            <person name="McCombie W.R."/>
            <person name="Paulsen I."/>
            <person name="Potashkin J."/>
            <person name="Shpakovski G.V."/>
            <person name="Ussery D."/>
            <person name="Barrell B.G."/>
            <person name="Nurse P."/>
        </authorList>
    </citation>
    <scope>NUCLEOTIDE SEQUENCE [LARGE SCALE GENOMIC DNA]</scope>
    <source>
        <strain>972 / ATCC 24843</strain>
    </source>
</reference>
<reference key="2">
    <citation type="journal article" date="2006" name="Microbiology">
        <title>Homocysteine accumulation causes a defect in purine biosynthesis: further characterization of Schizosaccharomyces pombe methionine auxotrophs.</title>
        <authorList>
            <person name="Fujita Y."/>
            <person name="Ukena E."/>
            <person name="Iefuji H."/>
            <person name="Giga-Hama Y."/>
            <person name="Takegawa K."/>
        </authorList>
    </citation>
    <scope>DISRUPTION PHENOTYPE</scope>
    <scope>FUNCTION</scope>
</reference>
<reference key="3">
    <citation type="journal article" date="2006" name="Nat. Biotechnol.">
        <title>ORFeome cloning and global analysis of protein localization in the fission yeast Schizosaccharomyces pombe.</title>
        <authorList>
            <person name="Matsuyama A."/>
            <person name="Arai R."/>
            <person name="Yashiroda Y."/>
            <person name="Shirai A."/>
            <person name="Kamata A."/>
            <person name="Sekido S."/>
            <person name="Kobayashi Y."/>
            <person name="Hashimoto A."/>
            <person name="Hamamoto M."/>
            <person name="Hiraoka Y."/>
            <person name="Horinouchi S."/>
            <person name="Yoshida M."/>
        </authorList>
    </citation>
    <scope>SUBCELLULAR LOCATION [LARGE SCALE ANALYSIS]</scope>
</reference>
<protein>
    <recommendedName>
        <fullName>Probable phosphoadenosine phosphosulfate reductase</fullName>
        <ecNumber>1.8.4.8</ecNumber>
    </recommendedName>
    <alternativeName>
        <fullName>3'-phosphoadenylylsulfate reductase</fullName>
    </alternativeName>
    <alternativeName>
        <fullName>PAPS reductase, thioredoxin dependent</fullName>
    </alternativeName>
    <alternativeName>
        <fullName>PAdoPS reductase</fullName>
    </alternativeName>
</protein>
<gene>
    <name type="primary">met16</name>
    <name type="ORF">SPAC13G7.06</name>
</gene>
<keyword id="KW-0028">Amino-acid biosynthesis</keyword>
<keyword id="KW-0198">Cysteine biosynthesis</keyword>
<keyword id="KW-0963">Cytoplasm</keyword>
<keyword id="KW-0486">Methionine biosynthesis</keyword>
<keyword id="KW-0521">NADP</keyword>
<keyword id="KW-0539">Nucleus</keyword>
<keyword id="KW-0560">Oxidoreductase</keyword>
<keyword id="KW-1185">Reference proteome</keyword>
<name>MET16_SCHPO</name>
<proteinExistence type="inferred from homology"/>
<accession>Q10270</accession>